<accession>Q9X7B9</accession>
<organism>
    <name type="scientific">Mycobacterium leprae (strain TN)</name>
    <dbReference type="NCBI Taxonomy" id="272631"/>
    <lineage>
        <taxon>Bacteria</taxon>
        <taxon>Bacillati</taxon>
        <taxon>Actinomycetota</taxon>
        <taxon>Actinomycetes</taxon>
        <taxon>Mycobacteriales</taxon>
        <taxon>Mycobacteriaceae</taxon>
        <taxon>Mycobacterium</taxon>
    </lineage>
</organism>
<feature type="chain" id="PRO_0000158144" description="Imidazoleglycerol-phosphate dehydratase">
    <location>
        <begin position="1"/>
        <end position="210"/>
    </location>
</feature>
<dbReference type="EC" id="4.2.1.19" evidence="1"/>
<dbReference type="EMBL" id="AL049913">
    <property type="protein sequence ID" value="CAB43168.1"/>
    <property type="molecule type" value="Genomic_DNA"/>
</dbReference>
<dbReference type="EMBL" id="AL583921">
    <property type="protein sequence ID" value="CAC31640.1"/>
    <property type="molecule type" value="Genomic_DNA"/>
</dbReference>
<dbReference type="PIR" id="T45248">
    <property type="entry name" value="T45248"/>
</dbReference>
<dbReference type="RefSeq" id="NP_301908.1">
    <property type="nucleotide sequence ID" value="NC_002677.1"/>
</dbReference>
<dbReference type="RefSeq" id="WP_010908229.1">
    <property type="nucleotide sequence ID" value="NC_002677.1"/>
</dbReference>
<dbReference type="SMR" id="Q9X7B9"/>
<dbReference type="STRING" id="272631.gene:17575091"/>
<dbReference type="KEGG" id="mle:ML1259"/>
<dbReference type="PATRIC" id="fig|272631.5.peg.2320"/>
<dbReference type="Leproma" id="ML1259"/>
<dbReference type="eggNOG" id="COG0131">
    <property type="taxonomic scope" value="Bacteria"/>
</dbReference>
<dbReference type="HOGENOM" id="CLU_044308_3_0_11"/>
<dbReference type="OrthoDB" id="9790411at2"/>
<dbReference type="UniPathway" id="UPA00031">
    <property type="reaction ID" value="UER00011"/>
</dbReference>
<dbReference type="Proteomes" id="UP000000806">
    <property type="component" value="Chromosome"/>
</dbReference>
<dbReference type="GO" id="GO:0005737">
    <property type="term" value="C:cytoplasm"/>
    <property type="evidence" value="ECO:0007669"/>
    <property type="project" value="UniProtKB-SubCell"/>
</dbReference>
<dbReference type="GO" id="GO:0004424">
    <property type="term" value="F:imidazoleglycerol-phosphate dehydratase activity"/>
    <property type="evidence" value="ECO:0007669"/>
    <property type="project" value="UniProtKB-UniRule"/>
</dbReference>
<dbReference type="GO" id="GO:0000105">
    <property type="term" value="P:L-histidine biosynthetic process"/>
    <property type="evidence" value="ECO:0007669"/>
    <property type="project" value="UniProtKB-UniRule"/>
</dbReference>
<dbReference type="CDD" id="cd07914">
    <property type="entry name" value="IGPD"/>
    <property type="match status" value="1"/>
</dbReference>
<dbReference type="FunFam" id="3.30.230.40:FF:000001">
    <property type="entry name" value="Imidazoleglycerol-phosphate dehydratase HisB"/>
    <property type="match status" value="1"/>
</dbReference>
<dbReference type="FunFam" id="3.30.230.40:FF:000003">
    <property type="entry name" value="Imidazoleglycerol-phosphate dehydratase HisB"/>
    <property type="match status" value="1"/>
</dbReference>
<dbReference type="Gene3D" id="3.30.230.40">
    <property type="entry name" value="Imidazole glycerol phosphate dehydratase, domain 1"/>
    <property type="match status" value="2"/>
</dbReference>
<dbReference type="HAMAP" id="MF_00076">
    <property type="entry name" value="HisB"/>
    <property type="match status" value="1"/>
</dbReference>
<dbReference type="InterPro" id="IPR038494">
    <property type="entry name" value="IGPD_sf"/>
</dbReference>
<dbReference type="InterPro" id="IPR000807">
    <property type="entry name" value="ImidazoleglycerolP_deHydtase"/>
</dbReference>
<dbReference type="InterPro" id="IPR020565">
    <property type="entry name" value="ImidazoleglycerP_deHydtase_CS"/>
</dbReference>
<dbReference type="InterPro" id="IPR020568">
    <property type="entry name" value="Ribosomal_Su5_D2-typ_SF"/>
</dbReference>
<dbReference type="NCBIfam" id="NF002110">
    <property type="entry name" value="PRK00951.1-6"/>
    <property type="match status" value="1"/>
</dbReference>
<dbReference type="NCBIfam" id="NF002111">
    <property type="entry name" value="PRK00951.2-1"/>
    <property type="match status" value="1"/>
</dbReference>
<dbReference type="NCBIfam" id="NF002114">
    <property type="entry name" value="PRK00951.2-4"/>
    <property type="match status" value="1"/>
</dbReference>
<dbReference type="PANTHER" id="PTHR23133:SF2">
    <property type="entry name" value="IMIDAZOLEGLYCEROL-PHOSPHATE DEHYDRATASE"/>
    <property type="match status" value="1"/>
</dbReference>
<dbReference type="PANTHER" id="PTHR23133">
    <property type="entry name" value="IMIDAZOLEGLYCEROL-PHOSPHATE DEHYDRATASE HIS7"/>
    <property type="match status" value="1"/>
</dbReference>
<dbReference type="Pfam" id="PF00475">
    <property type="entry name" value="IGPD"/>
    <property type="match status" value="1"/>
</dbReference>
<dbReference type="SUPFAM" id="SSF54211">
    <property type="entry name" value="Ribosomal protein S5 domain 2-like"/>
    <property type="match status" value="2"/>
</dbReference>
<dbReference type="PROSITE" id="PS00954">
    <property type="entry name" value="IGP_DEHYDRATASE_1"/>
    <property type="match status" value="1"/>
</dbReference>
<dbReference type="PROSITE" id="PS00955">
    <property type="entry name" value="IGP_DEHYDRATASE_2"/>
    <property type="match status" value="1"/>
</dbReference>
<proteinExistence type="inferred from homology"/>
<reference key="1">
    <citation type="journal article" date="2001" name="Nature">
        <title>Massive gene decay in the leprosy bacillus.</title>
        <authorList>
            <person name="Cole S.T."/>
            <person name="Eiglmeier K."/>
            <person name="Parkhill J."/>
            <person name="James K.D."/>
            <person name="Thomson N.R."/>
            <person name="Wheeler P.R."/>
            <person name="Honore N."/>
            <person name="Garnier T."/>
            <person name="Churcher C.M."/>
            <person name="Harris D.E."/>
            <person name="Mungall K.L."/>
            <person name="Basham D."/>
            <person name="Brown D."/>
            <person name="Chillingworth T."/>
            <person name="Connor R."/>
            <person name="Davies R.M."/>
            <person name="Devlin K."/>
            <person name="Duthoy S."/>
            <person name="Feltwell T."/>
            <person name="Fraser A."/>
            <person name="Hamlin N."/>
            <person name="Holroyd S."/>
            <person name="Hornsby T."/>
            <person name="Jagels K."/>
            <person name="Lacroix C."/>
            <person name="Maclean J."/>
            <person name="Moule S."/>
            <person name="Murphy L.D."/>
            <person name="Oliver K."/>
            <person name="Quail M.A."/>
            <person name="Rajandream M.A."/>
            <person name="Rutherford K.M."/>
            <person name="Rutter S."/>
            <person name="Seeger K."/>
            <person name="Simon S."/>
            <person name="Simmonds M."/>
            <person name="Skelton J."/>
            <person name="Squares R."/>
            <person name="Squares S."/>
            <person name="Stevens K."/>
            <person name="Taylor K."/>
            <person name="Whitehead S."/>
            <person name="Woodward J.R."/>
            <person name="Barrell B.G."/>
        </authorList>
    </citation>
    <scope>NUCLEOTIDE SEQUENCE [LARGE SCALE GENOMIC DNA]</scope>
    <source>
        <strain>TN</strain>
    </source>
</reference>
<evidence type="ECO:0000255" key="1">
    <source>
        <dbReference type="HAMAP-Rule" id="MF_00076"/>
    </source>
</evidence>
<gene>
    <name evidence="1" type="primary">hisB</name>
    <name type="ordered locus">ML1259</name>
    <name type="ORF">MLCB1610.22</name>
</gene>
<sequence>MTNTEVGKTTRRARIERRTSESDIVVELDLDGTGQVHIDTGVSFYDHMLTALGSHASFDLTVCTKGDVEIEAHHTIEDTAIALGQAFGQALGNKKGIRRFGDAFIPMDETLVHAVVDVSGRPYCVHTGEPDHLQHNIISGSSVPYSTVINRHVFESLAANARIALHVRVLYGRDPHHITEAQYKAVARALSEAVKFDPRFSGVPSTKGVL</sequence>
<comment type="catalytic activity">
    <reaction evidence="1">
        <text>D-erythro-1-(imidazol-4-yl)glycerol 3-phosphate = 3-(imidazol-4-yl)-2-oxopropyl phosphate + H2O</text>
        <dbReference type="Rhea" id="RHEA:11040"/>
        <dbReference type="ChEBI" id="CHEBI:15377"/>
        <dbReference type="ChEBI" id="CHEBI:57766"/>
        <dbReference type="ChEBI" id="CHEBI:58278"/>
        <dbReference type="EC" id="4.2.1.19"/>
    </reaction>
</comment>
<comment type="pathway">
    <text evidence="1">Amino-acid biosynthesis; L-histidine biosynthesis; L-histidine from 5-phospho-alpha-D-ribose 1-diphosphate: step 6/9.</text>
</comment>
<comment type="subcellular location">
    <subcellularLocation>
        <location evidence="1">Cytoplasm</location>
    </subcellularLocation>
</comment>
<comment type="similarity">
    <text evidence="1">Belongs to the imidazoleglycerol-phosphate dehydratase family.</text>
</comment>
<keyword id="KW-0028">Amino-acid biosynthesis</keyword>
<keyword id="KW-0963">Cytoplasm</keyword>
<keyword id="KW-0368">Histidine biosynthesis</keyword>
<keyword id="KW-0456">Lyase</keyword>
<keyword id="KW-1185">Reference proteome</keyword>
<protein>
    <recommendedName>
        <fullName evidence="1">Imidazoleglycerol-phosphate dehydratase</fullName>
        <shortName evidence="1">IGPD</shortName>
        <ecNumber evidence="1">4.2.1.19</ecNumber>
    </recommendedName>
</protein>
<name>HIS7_MYCLE</name>